<protein>
    <recommendedName>
        <fullName evidence="1">Peptidyl-tRNA hydrolase</fullName>
        <shortName evidence="1">Pth</shortName>
        <ecNumber evidence="1">3.1.1.29</ecNumber>
    </recommendedName>
</protein>
<reference key="1">
    <citation type="submission" date="2008-02" db="EMBL/GenBank/DDBJ databases">
        <title>Complete sequence of chromosome 1 of Burkholderia cenocepacia MC0-3.</title>
        <authorList>
            <person name="Copeland A."/>
            <person name="Lucas S."/>
            <person name="Lapidus A."/>
            <person name="Barry K."/>
            <person name="Bruce D."/>
            <person name="Goodwin L."/>
            <person name="Glavina del Rio T."/>
            <person name="Dalin E."/>
            <person name="Tice H."/>
            <person name="Pitluck S."/>
            <person name="Chain P."/>
            <person name="Malfatti S."/>
            <person name="Shin M."/>
            <person name="Vergez L."/>
            <person name="Schmutz J."/>
            <person name="Larimer F."/>
            <person name="Land M."/>
            <person name="Hauser L."/>
            <person name="Kyrpides N."/>
            <person name="Mikhailova N."/>
            <person name="Tiedje J."/>
            <person name="Richardson P."/>
        </authorList>
    </citation>
    <scope>NUCLEOTIDE SEQUENCE [LARGE SCALE GENOMIC DNA]</scope>
    <source>
        <strain>MC0-3</strain>
    </source>
</reference>
<gene>
    <name evidence="1" type="primary">pth</name>
    <name type="ordered locus">Bcenmc03_2815</name>
</gene>
<comment type="function">
    <text evidence="1">Hydrolyzes ribosome-free peptidyl-tRNAs (with 1 or more amino acids incorporated), which drop off the ribosome during protein synthesis, or as a result of ribosome stalling.</text>
</comment>
<comment type="function">
    <text evidence="1">Catalyzes the release of premature peptidyl moieties from peptidyl-tRNA molecules trapped in stalled 50S ribosomal subunits, and thus maintains levels of free tRNAs and 50S ribosomes.</text>
</comment>
<comment type="catalytic activity">
    <reaction evidence="1">
        <text>an N-acyl-L-alpha-aminoacyl-tRNA + H2O = an N-acyl-L-amino acid + a tRNA + H(+)</text>
        <dbReference type="Rhea" id="RHEA:54448"/>
        <dbReference type="Rhea" id="RHEA-COMP:10123"/>
        <dbReference type="Rhea" id="RHEA-COMP:13883"/>
        <dbReference type="ChEBI" id="CHEBI:15377"/>
        <dbReference type="ChEBI" id="CHEBI:15378"/>
        <dbReference type="ChEBI" id="CHEBI:59874"/>
        <dbReference type="ChEBI" id="CHEBI:78442"/>
        <dbReference type="ChEBI" id="CHEBI:138191"/>
        <dbReference type="EC" id="3.1.1.29"/>
    </reaction>
</comment>
<comment type="subunit">
    <text evidence="1">Monomer.</text>
</comment>
<comment type="subcellular location">
    <subcellularLocation>
        <location evidence="1">Cytoplasm</location>
    </subcellularLocation>
</comment>
<comment type="similarity">
    <text evidence="1">Belongs to the PTH family.</text>
</comment>
<keyword id="KW-0963">Cytoplasm</keyword>
<keyword id="KW-0378">Hydrolase</keyword>
<keyword id="KW-0694">RNA-binding</keyword>
<keyword id="KW-0820">tRNA-binding</keyword>
<feature type="chain" id="PRO_1000092917" description="Peptidyl-tRNA hydrolase">
    <location>
        <begin position="1"/>
        <end position="199"/>
    </location>
</feature>
<feature type="active site" description="Proton acceptor" evidence="1">
    <location>
        <position position="20"/>
    </location>
</feature>
<feature type="binding site" evidence="1">
    <location>
        <position position="15"/>
    </location>
    <ligand>
        <name>tRNA</name>
        <dbReference type="ChEBI" id="CHEBI:17843"/>
    </ligand>
</feature>
<feature type="binding site" evidence="1">
    <location>
        <position position="66"/>
    </location>
    <ligand>
        <name>tRNA</name>
        <dbReference type="ChEBI" id="CHEBI:17843"/>
    </ligand>
</feature>
<feature type="binding site" evidence="1">
    <location>
        <position position="68"/>
    </location>
    <ligand>
        <name>tRNA</name>
        <dbReference type="ChEBI" id="CHEBI:17843"/>
    </ligand>
</feature>
<feature type="binding site" evidence="1">
    <location>
        <position position="114"/>
    </location>
    <ligand>
        <name>tRNA</name>
        <dbReference type="ChEBI" id="CHEBI:17843"/>
    </ligand>
</feature>
<feature type="site" description="Discriminates between blocked and unblocked aminoacyl-tRNA" evidence="1">
    <location>
        <position position="10"/>
    </location>
</feature>
<feature type="site" description="Stabilizes the basic form of H active site to accept a proton" evidence="1">
    <location>
        <position position="93"/>
    </location>
</feature>
<sequence length="199" mass="22080">MIKLIVGLGNPGAEYTATRHNAGFWLIDQLAREAGTTLRDERRFHGFYAKARLHGEEVHLLEPQTYMNRSGQSVVALAQFFKILPDQILVAHDELDLPPGTVKLKLGGGSGGHNGLKDITAHLSSQQYWRLRIGIGHPRDLIPESARAGAKPDVANFVLKPPRREEQDVIDASIERALAVMPMVVKGELDRATMQLHRN</sequence>
<dbReference type="EC" id="3.1.1.29" evidence="1"/>
<dbReference type="EMBL" id="CP000958">
    <property type="protein sequence ID" value="ACA91974.1"/>
    <property type="molecule type" value="Genomic_DNA"/>
</dbReference>
<dbReference type="RefSeq" id="WP_006477776.1">
    <property type="nucleotide sequence ID" value="NC_010508.1"/>
</dbReference>
<dbReference type="SMR" id="B1JYQ1"/>
<dbReference type="GeneID" id="83049600"/>
<dbReference type="KEGG" id="bcm:Bcenmc03_2815"/>
<dbReference type="HOGENOM" id="CLU_062456_3_1_4"/>
<dbReference type="Proteomes" id="UP000002169">
    <property type="component" value="Chromosome 1"/>
</dbReference>
<dbReference type="GO" id="GO:0005737">
    <property type="term" value="C:cytoplasm"/>
    <property type="evidence" value="ECO:0007669"/>
    <property type="project" value="UniProtKB-SubCell"/>
</dbReference>
<dbReference type="GO" id="GO:0004045">
    <property type="term" value="F:peptidyl-tRNA hydrolase activity"/>
    <property type="evidence" value="ECO:0007669"/>
    <property type="project" value="UniProtKB-UniRule"/>
</dbReference>
<dbReference type="GO" id="GO:0000049">
    <property type="term" value="F:tRNA binding"/>
    <property type="evidence" value="ECO:0007669"/>
    <property type="project" value="UniProtKB-UniRule"/>
</dbReference>
<dbReference type="GO" id="GO:0006515">
    <property type="term" value="P:protein quality control for misfolded or incompletely synthesized proteins"/>
    <property type="evidence" value="ECO:0007669"/>
    <property type="project" value="UniProtKB-UniRule"/>
</dbReference>
<dbReference type="GO" id="GO:0072344">
    <property type="term" value="P:rescue of stalled ribosome"/>
    <property type="evidence" value="ECO:0007669"/>
    <property type="project" value="UniProtKB-UniRule"/>
</dbReference>
<dbReference type="CDD" id="cd00462">
    <property type="entry name" value="PTH"/>
    <property type="match status" value="1"/>
</dbReference>
<dbReference type="FunFam" id="3.40.50.1470:FF:000001">
    <property type="entry name" value="Peptidyl-tRNA hydrolase"/>
    <property type="match status" value="1"/>
</dbReference>
<dbReference type="Gene3D" id="3.40.50.1470">
    <property type="entry name" value="Peptidyl-tRNA hydrolase"/>
    <property type="match status" value="1"/>
</dbReference>
<dbReference type="HAMAP" id="MF_00083">
    <property type="entry name" value="Pept_tRNA_hydro_bact"/>
    <property type="match status" value="1"/>
</dbReference>
<dbReference type="InterPro" id="IPR001328">
    <property type="entry name" value="Pept_tRNA_hydro"/>
</dbReference>
<dbReference type="InterPro" id="IPR018171">
    <property type="entry name" value="Pept_tRNA_hydro_CS"/>
</dbReference>
<dbReference type="InterPro" id="IPR036416">
    <property type="entry name" value="Pept_tRNA_hydro_sf"/>
</dbReference>
<dbReference type="NCBIfam" id="TIGR00447">
    <property type="entry name" value="pth"/>
    <property type="match status" value="1"/>
</dbReference>
<dbReference type="PANTHER" id="PTHR17224">
    <property type="entry name" value="PEPTIDYL-TRNA HYDROLASE"/>
    <property type="match status" value="1"/>
</dbReference>
<dbReference type="PANTHER" id="PTHR17224:SF1">
    <property type="entry name" value="PEPTIDYL-TRNA HYDROLASE"/>
    <property type="match status" value="1"/>
</dbReference>
<dbReference type="Pfam" id="PF01195">
    <property type="entry name" value="Pept_tRNA_hydro"/>
    <property type="match status" value="1"/>
</dbReference>
<dbReference type="SUPFAM" id="SSF53178">
    <property type="entry name" value="Peptidyl-tRNA hydrolase-like"/>
    <property type="match status" value="1"/>
</dbReference>
<dbReference type="PROSITE" id="PS01195">
    <property type="entry name" value="PEPT_TRNA_HYDROL_1"/>
    <property type="match status" value="1"/>
</dbReference>
<dbReference type="PROSITE" id="PS01196">
    <property type="entry name" value="PEPT_TRNA_HYDROL_2"/>
    <property type="match status" value="1"/>
</dbReference>
<organism>
    <name type="scientific">Burkholderia orbicola (strain MC0-3)</name>
    <dbReference type="NCBI Taxonomy" id="406425"/>
    <lineage>
        <taxon>Bacteria</taxon>
        <taxon>Pseudomonadati</taxon>
        <taxon>Pseudomonadota</taxon>
        <taxon>Betaproteobacteria</taxon>
        <taxon>Burkholderiales</taxon>
        <taxon>Burkholderiaceae</taxon>
        <taxon>Burkholderia</taxon>
        <taxon>Burkholderia cepacia complex</taxon>
        <taxon>Burkholderia orbicola</taxon>
    </lineage>
</organism>
<evidence type="ECO:0000255" key="1">
    <source>
        <dbReference type="HAMAP-Rule" id="MF_00083"/>
    </source>
</evidence>
<proteinExistence type="inferred from homology"/>
<accession>B1JYQ1</accession>
<name>PTH_BURO0</name>